<feature type="chain" id="PRO_0000302784" description="Mediator of RNA polymerase II transcription subunit 5">
    <location>
        <begin position="1"/>
        <end position="981"/>
    </location>
</feature>
<proteinExistence type="inferred from homology"/>
<protein>
    <recommendedName>
        <fullName>Mediator of RNA polymerase II transcription subunit 5</fullName>
    </recommendedName>
    <alternativeName>
        <fullName>Mediator complex subunit 5</fullName>
    </alternativeName>
</protein>
<comment type="function">
    <text evidence="1">Component of the Mediator complex, a coactivator involved in the regulated transcription of nearly all RNA polymerase II-dependent genes. Mediator functions as a bridge to convey information from gene-specific regulatory proteins to the basal RNA polymerase II transcription machinery. Mediator is recruited to promoters by direct interactions with regulatory proteins and serves as a scaffold for the assembly of a functional preinitiation complex with RNA polymerase II and the general transcription factors (By similarity).</text>
</comment>
<comment type="subunit">
    <text evidence="1">Component of the Mediator complex.</text>
</comment>
<comment type="subcellular location">
    <subcellularLocation>
        <location evidence="1">Nucleus</location>
    </subcellularLocation>
</comment>
<comment type="similarity">
    <text evidence="2">Belongs to the Mediator complex subunit 5 family.</text>
</comment>
<reference key="1">
    <citation type="journal article" date="2007" name="Nat. Biotechnol.">
        <title>Genome sequence of the lignocellulose-bioconverting and xylose-fermenting yeast Pichia stipitis.</title>
        <authorList>
            <person name="Jeffries T.W."/>
            <person name="Grigoriev I.V."/>
            <person name="Grimwood J."/>
            <person name="Laplaza J.M."/>
            <person name="Aerts A."/>
            <person name="Salamov A."/>
            <person name="Schmutz J."/>
            <person name="Lindquist E."/>
            <person name="Dehal P."/>
            <person name="Shapiro H."/>
            <person name="Jin Y.-S."/>
            <person name="Passoth V."/>
            <person name="Richardson P.M."/>
        </authorList>
    </citation>
    <scope>NUCLEOTIDE SEQUENCE [LARGE SCALE GENOMIC DNA]</scope>
    <source>
        <strain>ATCC 58785 / CBS 6054 / NBRC 10063 / NRRL Y-11545</strain>
    </source>
</reference>
<sequence>MSETVSLHKLVKKAVHSKLSFKTFLGLFSQLNTKQVVQDGEYQTEILEIVQNPRNLNDKKITEYKVVLAIQLSLSSSEELKRFWGNLSKISLVGQVDYLIRLNKILKYEYSKYDKDIVRLLIKVQYCDYIVEVLDSFGDKKLSTEQKSLANHIVFFASSVIEHVVVKDEALVNDLVFQLATRLEGLRLSNLLDFLLLKSKNILSEDQIRLTDSSGSGEDKSSDLPTITTSLYKNLSVGSLSSAKQETYNETIKFLWLNKIMKSWKFADNESIFNNFVHNFIPSSDKNKNPYLTSFELIKATFKGFGYAVINNDDCYVLFNWKNFIITRIPVILSTLKFANVNDEETLERAVLNAFNSLPDSIVKVLTNLASGSTKVYDLRQIFIKSLIFNRLLPPVAFQKFFPMESKITQQVILSELAQYNHDLNLRRKFNDKLINVNSEFTSLEESGLLELCNSLPASLEYSYSRQIELSNAINDIIDEMKISREHEKLNRLLLSVMSNVQLTNILVFNSNPYVVLGKMIDYIDSENFRIDDDDENFQDVYSYCGVLILSIISIIEKFKIDLSTFNIKNSFALDYINNFYYRLCDDLTNQIPVNSDEEDNTIATNYNNLLIDWINALFDDSNDGLSDDLIKSISIKQIYKLIPLVYQQAITATSIGKIDFSILTNGIDYLSQVFLIPTTVSIINWLLSEISNKKTDAESLPVKVLSEIVKSNISSESGSQELSSLVFKIVVNICGSNILIALKKIKDWENSQRIRDVVSIVTANLDSNYVEKDLSLPESKSDININEQIKSHLVNFQQQADSPTPIHAFIHRFISDSKDQVLRVLLQEVTSYQKQNNEATKIFINLASYLVVSSSIDSVEDKKYWHGYLSNVSSSATEHKILKNSDKEFNSSMDYHYSSIFNDASSGASNDDDLFNDKSSKQLSSGKLLEQLRTKVNRYNNLLAKFNVIFAENQDPSSPWHKTVNTLADKLLDDINDLYI</sequence>
<accession>A3M022</accession>
<keyword id="KW-0010">Activator</keyword>
<keyword id="KW-0539">Nucleus</keyword>
<keyword id="KW-1185">Reference proteome</keyword>
<keyword id="KW-0804">Transcription</keyword>
<keyword id="KW-0805">Transcription regulation</keyword>
<gene>
    <name type="primary">NUT1</name>
    <name type="synonym">MED5</name>
    <name type="ORF">PICST_64197</name>
</gene>
<evidence type="ECO:0000250" key="1"/>
<evidence type="ECO:0000305" key="2"/>
<name>MED5_PICST</name>
<dbReference type="EMBL" id="CP000502">
    <property type="protein sequence ID" value="ABN68443.2"/>
    <property type="molecule type" value="Genomic_DNA"/>
</dbReference>
<dbReference type="RefSeq" id="XP_001386472.2">
    <property type="nucleotide sequence ID" value="XM_001386435.1"/>
</dbReference>
<dbReference type="SMR" id="A3M022"/>
<dbReference type="STRING" id="322104.A3M022"/>
<dbReference type="GeneID" id="4840875"/>
<dbReference type="KEGG" id="pic:PICST_64197"/>
<dbReference type="eggNOG" id="ENOG502R1HB">
    <property type="taxonomic scope" value="Eukaryota"/>
</dbReference>
<dbReference type="HOGENOM" id="CLU_012200_0_0_1"/>
<dbReference type="InParanoid" id="A3M022"/>
<dbReference type="OMA" id="MVINICG"/>
<dbReference type="OrthoDB" id="5322661at2759"/>
<dbReference type="Proteomes" id="UP000002258">
    <property type="component" value="Chromosome 8"/>
</dbReference>
<dbReference type="GO" id="GO:0016592">
    <property type="term" value="C:mediator complex"/>
    <property type="evidence" value="ECO:0007669"/>
    <property type="project" value="InterPro"/>
</dbReference>
<dbReference type="GO" id="GO:0003712">
    <property type="term" value="F:transcription coregulator activity"/>
    <property type="evidence" value="ECO:0007669"/>
    <property type="project" value="InterPro"/>
</dbReference>
<dbReference type="GO" id="GO:0006357">
    <property type="term" value="P:regulation of transcription by RNA polymerase II"/>
    <property type="evidence" value="ECO:0007669"/>
    <property type="project" value="InterPro"/>
</dbReference>
<dbReference type="InterPro" id="IPR014801">
    <property type="entry name" value="Mediator_Med5_fun"/>
</dbReference>
<dbReference type="PANTHER" id="PTHR35784">
    <property type="entry name" value="MEDIATOR OF RNA POLYMERASE II TRANSCRIPTION SUBUNIT 5"/>
    <property type="match status" value="1"/>
</dbReference>
<dbReference type="PANTHER" id="PTHR35784:SF1">
    <property type="entry name" value="MEDIATOR OF RNA POLYMERASE II TRANSCRIPTION SUBUNIT 5"/>
    <property type="match status" value="1"/>
</dbReference>
<dbReference type="Pfam" id="PF08689">
    <property type="entry name" value="Med5"/>
    <property type="match status" value="1"/>
</dbReference>
<organism>
    <name type="scientific">Scheffersomyces stipitis (strain ATCC 58785 / CBS 6054 / NBRC 10063 / NRRL Y-11545)</name>
    <name type="common">Yeast</name>
    <name type="synonym">Pichia stipitis</name>
    <dbReference type="NCBI Taxonomy" id="322104"/>
    <lineage>
        <taxon>Eukaryota</taxon>
        <taxon>Fungi</taxon>
        <taxon>Dikarya</taxon>
        <taxon>Ascomycota</taxon>
        <taxon>Saccharomycotina</taxon>
        <taxon>Pichiomycetes</taxon>
        <taxon>Debaryomycetaceae</taxon>
        <taxon>Scheffersomyces</taxon>
    </lineage>
</organism>